<keyword id="KW-0963">Cytoplasm</keyword>
<keyword id="KW-0312">Gluconeogenesis</keyword>
<keyword id="KW-0324">Glycolysis</keyword>
<keyword id="KW-0413">Isomerase</keyword>
<protein>
    <recommendedName>
        <fullName evidence="1">Glucose-6-phosphate isomerase</fullName>
        <shortName evidence="1">GPI</shortName>
        <ecNumber evidence="1">5.3.1.9</ecNumber>
    </recommendedName>
    <alternativeName>
        <fullName evidence="1">Phosphoglucose isomerase</fullName>
        <shortName evidence="1">PGI</shortName>
    </alternativeName>
    <alternativeName>
        <fullName evidence="1">Phosphohexose isomerase</fullName>
        <shortName evidence="1">PHI</shortName>
    </alternativeName>
</protein>
<name>G6PI_STAAE</name>
<evidence type="ECO:0000255" key="1">
    <source>
        <dbReference type="HAMAP-Rule" id="MF_00473"/>
    </source>
</evidence>
<organism>
    <name type="scientific">Staphylococcus aureus (strain Newman)</name>
    <dbReference type="NCBI Taxonomy" id="426430"/>
    <lineage>
        <taxon>Bacteria</taxon>
        <taxon>Bacillati</taxon>
        <taxon>Bacillota</taxon>
        <taxon>Bacilli</taxon>
        <taxon>Bacillales</taxon>
        <taxon>Staphylococcaceae</taxon>
        <taxon>Staphylococcus</taxon>
    </lineage>
</organism>
<accession>A6QFH3</accession>
<dbReference type="EC" id="5.3.1.9" evidence="1"/>
<dbReference type="EMBL" id="AP009351">
    <property type="protein sequence ID" value="BAF67105.1"/>
    <property type="molecule type" value="Genomic_DNA"/>
</dbReference>
<dbReference type="RefSeq" id="WP_000148855.1">
    <property type="nucleotide sequence ID" value="NZ_JBBIAE010000002.1"/>
</dbReference>
<dbReference type="SMR" id="A6QFH3"/>
<dbReference type="KEGG" id="sae:NWMN_0833"/>
<dbReference type="HOGENOM" id="CLU_037303_0_1_9"/>
<dbReference type="UniPathway" id="UPA00109">
    <property type="reaction ID" value="UER00181"/>
</dbReference>
<dbReference type="UniPathway" id="UPA00138"/>
<dbReference type="Proteomes" id="UP000006386">
    <property type="component" value="Chromosome"/>
</dbReference>
<dbReference type="GO" id="GO:0005829">
    <property type="term" value="C:cytosol"/>
    <property type="evidence" value="ECO:0007669"/>
    <property type="project" value="TreeGrafter"/>
</dbReference>
<dbReference type="GO" id="GO:0097367">
    <property type="term" value="F:carbohydrate derivative binding"/>
    <property type="evidence" value="ECO:0007669"/>
    <property type="project" value="InterPro"/>
</dbReference>
<dbReference type="GO" id="GO:0004347">
    <property type="term" value="F:glucose-6-phosphate isomerase activity"/>
    <property type="evidence" value="ECO:0007669"/>
    <property type="project" value="UniProtKB-UniRule"/>
</dbReference>
<dbReference type="GO" id="GO:0048029">
    <property type="term" value="F:monosaccharide binding"/>
    <property type="evidence" value="ECO:0007669"/>
    <property type="project" value="TreeGrafter"/>
</dbReference>
<dbReference type="GO" id="GO:0006094">
    <property type="term" value="P:gluconeogenesis"/>
    <property type="evidence" value="ECO:0007669"/>
    <property type="project" value="UniProtKB-UniRule"/>
</dbReference>
<dbReference type="GO" id="GO:0051156">
    <property type="term" value="P:glucose 6-phosphate metabolic process"/>
    <property type="evidence" value="ECO:0007669"/>
    <property type="project" value="TreeGrafter"/>
</dbReference>
<dbReference type="GO" id="GO:0006096">
    <property type="term" value="P:glycolytic process"/>
    <property type="evidence" value="ECO:0007669"/>
    <property type="project" value="UniProtKB-UniRule"/>
</dbReference>
<dbReference type="CDD" id="cd05015">
    <property type="entry name" value="SIS_PGI_1"/>
    <property type="match status" value="1"/>
</dbReference>
<dbReference type="CDD" id="cd05016">
    <property type="entry name" value="SIS_PGI_2"/>
    <property type="match status" value="1"/>
</dbReference>
<dbReference type="FunFam" id="3.40.50.10490:FF:000015">
    <property type="entry name" value="Glucose-6-phosphate isomerase"/>
    <property type="match status" value="1"/>
</dbReference>
<dbReference type="FunFam" id="3.40.50.10490:FF:000016">
    <property type="entry name" value="Glucose-6-phosphate isomerase"/>
    <property type="match status" value="1"/>
</dbReference>
<dbReference type="Gene3D" id="3.40.50.10490">
    <property type="entry name" value="Glucose-6-phosphate isomerase like protein, domain 1"/>
    <property type="match status" value="3"/>
</dbReference>
<dbReference type="HAMAP" id="MF_00473">
    <property type="entry name" value="G6P_isomerase"/>
    <property type="match status" value="1"/>
</dbReference>
<dbReference type="InterPro" id="IPR001672">
    <property type="entry name" value="G6P_Isomerase"/>
</dbReference>
<dbReference type="InterPro" id="IPR018189">
    <property type="entry name" value="Phosphoglucose_isomerase_CS"/>
</dbReference>
<dbReference type="InterPro" id="IPR046348">
    <property type="entry name" value="SIS_dom_sf"/>
</dbReference>
<dbReference type="InterPro" id="IPR035476">
    <property type="entry name" value="SIS_PGI_1"/>
</dbReference>
<dbReference type="InterPro" id="IPR035482">
    <property type="entry name" value="SIS_PGI_2"/>
</dbReference>
<dbReference type="NCBIfam" id="NF010697">
    <property type="entry name" value="PRK14097.1"/>
    <property type="match status" value="1"/>
</dbReference>
<dbReference type="PANTHER" id="PTHR11469">
    <property type="entry name" value="GLUCOSE-6-PHOSPHATE ISOMERASE"/>
    <property type="match status" value="1"/>
</dbReference>
<dbReference type="PANTHER" id="PTHR11469:SF1">
    <property type="entry name" value="GLUCOSE-6-PHOSPHATE ISOMERASE"/>
    <property type="match status" value="1"/>
</dbReference>
<dbReference type="Pfam" id="PF00342">
    <property type="entry name" value="PGI"/>
    <property type="match status" value="1"/>
</dbReference>
<dbReference type="PRINTS" id="PR00662">
    <property type="entry name" value="G6PISOMERASE"/>
</dbReference>
<dbReference type="SUPFAM" id="SSF53697">
    <property type="entry name" value="SIS domain"/>
    <property type="match status" value="1"/>
</dbReference>
<dbReference type="PROSITE" id="PS00765">
    <property type="entry name" value="P_GLUCOSE_ISOMERASE_1"/>
    <property type="match status" value="1"/>
</dbReference>
<dbReference type="PROSITE" id="PS00174">
    <property type="entry name" value="P_GLUCOSE_ISOMERASE_2"/>
    <property type="match status" value="1"/>
</dbReference>
<dbReference type="PROSITE" id="PS51463">
    <property type="entry name" value="P_GLUCOSE_ISOMERASE_3"/>
    <property type="match status" value="1"/>
</dbReference>
<reference key="1">
    <citation type="journal article" date="2008" name="J. Bacteriol.">
        <title>Genome sequence of Staphylococcus aureus strain Newman and comparative analysis of staphylococcal genomes: polymorphism and evolution of two major pathogenicity islands.</title>
        <authorList>
            <person name="Baba T."/>
            <person name="Bae T."/>
            <person name="Schneewind O."/>
            <person name="Takeuchi F."/>
            <person name="Hiramatsu K."/>
        </authorList>
    </citation>
    <scope>NUCLEOTIDE SEQUENCE [LARGE SCALE GENOMIC DNA]</scope>
    <source>
        <strain>Newman</strain>
    </source>
</reference>
<feature type="chain" id="PRO_1000072397" description="Glucose-6-phosphate isomerase">
    <location>
        <begin position="1"/>
        <end position="443"/>
    </location>
</feature>
<feature type="active site" description="Proton donor" evidence="1">
    <location>
        <position position="285"/>
    </location>
</feature>
<feature type="active site" evidence="1">
    <location>
        <position position="306"/>
    </location>
</feature>
<feature type="active site" evidence="1">
    <location>
        <position position="420"/>
    </location>
</feature>
<comment type="function">
    <text evidence="1">Catalyzes the reversible isomerization of glucose-6-phosphate to fructose-6-phosphate.</text>
</comment>
<comment type="catalytic activity">
    <reaction evidence="1">
        <text>alpha-D-glucose 6-phosphate = beta-D-fructose 6-phosphate</text>
        <dbReference type="Rhea" id="RHEA:11816"/>
        <dbReference type="ChEBI" id="CHEBI:57634"/>
        <dbReference type="ChEBI" id="CHEBI:58225"/>
        <dbReference type="EC" id="5.3.1.9"/>
    </reaction>
</comment>
<comment type="pathway">
    <text evidence="1">Carbohydrate biosynthesis; gluconeogenesis.</text>
</comment>
<comment type="pathway">
    <text evidence="1">Carbohydrate degradation; glycolysis; D-glyceraldehyde 3-phosphate and glycerone phosphate from D-glucose: step 2/4.</text>
</comment>
<comment type="subcellular location">
    <subcellularLocation>
        <location evidence="1">Cytoplasm</location>
    </subcellularLocation>
</comment>
<comment type="similarity">
    <text evidence="1">Belongs to the GPI family.</text>
</comment>
<sequence>MTHIQLDFSKTLEFFGEHELKQQQEIVKSIHKTIHEGTGAGSDFLGWVDLPVDYDKEEFSRIVEASKRIKENSDVLVVIGIGGSYLGARAAIEMLTSSFRNSNEYPEIVFVGNHLSSTYTKELVDYLADKDFSVNVISKSGTTTEPAVAFRLFKQLVEERYGKEEAQKRIFATTDKEKGALKQLATNEGYETFIVPDDVGGRYSVLTAVGLLPIATAGINIEAMMIGAAKAREELSSDKLEENIAYQYATIRNILYAKGYTTEMLINYEPSMQYFNEWWKQLFGESEGKDFKGIYPSSANYTTDLHSLGQYVQEGRRFLFETVVKVNHPKYDITIEKDSDDLDGLNYLAGKTIDEVNTKAFEGTLLAHTDGGVPNMVVNIPQLDEETFGYVVYFFELACAMSGYQLGVNPFNQPGVEAYKQNMFALLGKPGFEDLKKELEERL</sequence>
<proteinExistence type="inferred from homology"/>
<gene>
    <name evidence="1" type="primary">pgi</name>
    <name type="ordered locus">NWMN_0833</name>
</gene>